<name>IXTPA_PARUW</name>
<protein>
    <recommendedName>
        <fullName evidence="1">dITP/XTP pyrophosphatase</fullName>
        <ecNumber evidence="1">3.6.1.66</ecNumber>
    </recommendedName>
    <alternativeName>
        <fullName evidence="1">Non-canonical purine NTP pyrophosphatase</fullName>
    </alternativeName>
    <alternativeName>
        <fullName evidence="1">Non-standard purine NTP pyrophosphatase</fullName>
    </alternativeName>
    <alternativeName>
        <fullName evidence="1">Nucleoside-triphosphate diphosphatase</fullName>
    </alternativeName>
    <alternativeName>
        <fullName evidence="1">Nucleoside-triphosphate pyrophosphatase</fullName>
        <shortName evidence="1">NTPase</shortName>
    </alternativeName>
</protein>
<reference key="1">
    <citation type="journal article" date="2004" name="Science">
        <title>Illuminating the evolutionary history of chlamydiae.</title>
        <authorList>
            <person name="Horn M."/>
            <person name="Collingro A."/>
            <person name="Schmitz-Esser S."/>
            <person name="Beier C.L."/>
            <person name="Purkhold U."/>
            <person name="Fartmann B."/>
            <person name="Brandt P."/>
            <person name="Nyakatura G.J."/>
            <person name="Droege M."/>
            <person name="Frishman D."/>
            <person name="Rattei T."/>
            <person name="Mewes H.-W."/>
            <person name="Wagner M."/>
        </authorList>
    </citation>
    <scope>NUCLEOTIDE SEQUENCE [LARGE SCALE GENOMIC DNA]</scope>
    <source>
        <strain>UWE25</strain>
    </source>
</reference>
<proteinExistence type="inferred from homology"/>
<evidence type="ECO:0000255" key="1">
    <source>
        <dbReference type="HAMAP-Rule" id="MF_01405"/>
    </source>
</evidence>
<accession>Q6MF40</accession>
<comment type="function">
    <text evidence="1">Pyrophosphatase that catalyzes the hydrolysis of nucleoside triphosphates to their monophosphate derivatives, with a high preference for the non-canonical purine nucleotides XTP (xanthosine triphosphate), dITP (deoxyinosine triphosphate) and ITP. Seems to function as a house-cleaning enzyme that removes non-canonical purine nucleotides from the nucleotide pool, thus preventing their incorporation into DNA/RNA and avoiding chromosomal lesions.</text>
</comment>
<comment type="catalytic activity">
    <reaction evidence="1">
        <text>XTP + H2O = XMP + diphosphate + H(+)</text>
        <dbReference type="Rhea" id="RHEA:28610"/>
        <dbReference type="ChEBI" id="CHEBI:15377"/>
        <dbReference type="ChEBI" id="CHEBI:15378"/>
        <dbReference type="ChEBI" id="CHEBI:33019"/>
        <dbReference type="ChEBI" id="CHEBI:57464"/>
        <dbReference type="ChEBI" id="CHEBI:61314"/>
        <dbReference type="EC" id="3.6.1.66"/>
    </reaction>
</comment>
<comment type="catalytic activity">
    <reaction evidence="1">
        <text>dITP + H2O = dIMP + diphosphate + H(+)</text>
        <dbReference type="Rhea" id="RHEA:28342"/>
        <dbReference type="ChEBI" id="CHEBI:15377"/>
        <dbReference type="ChEBI" id="CHEBI:15378"/>
        <dbReference type="ChEBI" id="CHEBI:33019"/>
        <dbReference type="ChEBI" id="CHEBI:61194"/>
        <dbReference type="ChEBI" id="CHEBI:61382"/>
        <dbReference type="EC" id="3.6.1.66"/>
    </reaction>
</comment>
<comment type="catalytic activity">
    <reaction evidence="1">
        <text>ITP + H2O = IMP + diphosphate + H(+)</text>
        <dbReference type="Rhea" id="RHEA:29399"/>
        <dbReference type="ChEBI" id="CHEBI:15377"/>
        <dbReference type="ChEBI" id="CHEBI:15378"/>
        <dbReference type="ChEBI" id="CHEBI:33019"/>
        <dbReference type="ChEBI" id="CHEBI:58053"/>
        <dbReference type="ChEBI" id="CHEBI:61402"/>
        <dbReference type="EC" id="3.6.1.66"/>
    </reaction>
</comment>
<comment type="cofactor">
    <cofactor evidence="1">
        <name>Mg(2+)</name>
        <dbReference type="ChEBI" id="CHEBI:18420"/>
    </cofactor>
    <text evidence="1">Binds 1 Mg(2+) ion per subunit.</text>
</comment>
<comment type="subunit">
    <text evidence="1">Homodimer.</text>
</comment>
<comment type="similarity">
    <text evidence="1">Belongs to the HAM1 NTPase family.</text>
</comment>
<organism>
    <name type="scientific">Protochlamydia amoebophila (strain UWE25)</name>
    <dbReference type="NCBI Taxonomy" id="264201"/>
    <lineage>
        <taxon>Bacteria</taxon>
        <taxon>Pseudomonadati</taxon>
        <taxon>Chlamydiota</taxon>
        <taxon>Chlamydiia</taxon>
        <taxon>Parachlamydiales</taxon>
        <taxon>Parachlamydiaceae</taxon>
        <taxon>Candidatus Protochlamydia</taxon>
    </lineage>
</organism>
<gene>
    <name type="ordered locus">pc0085</name>
</gene>
<keyword id="KW-0378">Hydrolase</keyword>
<keyword id="KW-0460">Magnesium</keyword>
<keyword id="KW-0479">Metal-binding</keyword>
<keyword id="KW-0546">Nucleotide metabolism</keyword>
<keyword id="KW-0547">Nucleotide-binding</keyword>
<keyword id="KW-1185">Reference proteome</keyword>
<sequence length="199" mass="22819">MEILLATTNLHKIREFKEMCKAFAHLEILSLHQFPAYMCPEEVGTNFKENAISKAEHAAKHLNRWVLADDSGLVVPRLSGKPGIYSRRFAGLEATDEENRKKLLLEMRQLINKEDRTAYYECCLALSSPTGLQKCVQGICEGFILNEARGRNGFGYDSLFVKNDYEKSFAEIDEAVKNRISHRRKAFERLSAFLENLRD</sequence>
<dbReference type="EC" id="3.6.1.66" evidence="1"/>
<dbReference type="EMBL" id="BX908798">
    <property type="protein sequence ID" value="CAF22809.1"/>
    <property type="molecule type" value="Genomic_DNA"/>
</dbReference>
<dbReference type="RefSeq" id="WP_011174635.1">
    <property type="nucleotide sequence ID" value="NC_005861.2"/>
</dbReference>
<dbReference type="SMR" id="Q6MF40"/>
<dbReference type="STRING" id="264201.pc0085"/>
<dbReference type="KEGG" id="pcu:PC_RS00410"/>
<dbReference type="eggNOG" id="COG0127">
    <property type="taxonomic scope" value="Bacteria"/>
</dbReference>
<dbReference type="HOGENOM" id="CLU_082080_0_2_0"/>
<dbReference type="OrthoDB" id="9807456at2"/>
<dbReference type="Proteomes" id="UP000000529">
    <property type="component" value="Chromosome"/>
</dbReference>
<dbReference type="GO" id="GO:0005829">
    <property type="term" value="C:cytosol"/>
    <property type="evidence" value="ECO:0007669"/>
    <property type="project" value="TreeGrafter"/>
</dbReference>
<dbReference type="GO" id="GO:0035870">
    <property type="term" value="F:dITP diphosphatase activity"/>
    <property type="evidence" value="ECO:0007669"/>
    <property type="project" value="RHEA"/>
</dbReference>
<dbReference type="GO" id="GO:0036220">
    <property type="term" value="F:ITP diphosphatase activity"/>
    <property type="evidence" value="ECO:0007669"/>
    <property type="project" value="UniProtKB-EC"/>
</dbReference>
<dbReference type="GO" id="GO:0046872">
    <property type="term" value="F:metal ion binding"/>
    <property type="evidence" value="ECO:0007669"/>
    <property type="project" value="UniProtKB-KW"/>
</dbReference>
<dbReference type="GO" id="GO:0000166">
    <property type="term" value="F:nucleotide binding"/>
    <property type="evidence" value="ECO:0007669"/>
    <property type="project" value="UniProtKB-KW"/>
</dbReference>
<dbReference type="GO" id="GO:0017111">
    <property type="term" value="F:ribonucleoside triphosphate phosphatase activity"/>
    <property type="evidence" value="ECO:0007669"/>
    <property type="project" value="InterPro"/>
</dbReference>
<dbReference type="GO" id="GO:0036222">
    <property type="term" value="F:XTP diphosphatase activity"/>
    <property type="evidence" value="ECO:0007669"/>
    <property type="project" value="RHEA"/>
</dbReference>
<dbReference type="GO" id="GO:0009117">
    <property type="term" value="P:nucleotide metabolic process"/>
    <property type="evidence" value="ECO:0007669"/>
    <property type="project" value="UniProtKB-KW"/>
</dbReference>
<dbReference type="GO" id="GO:0009146">
    <property type="term" value="P:purine nucleoside triphosphate catabolic process"/>
    <property type="evidence" value="ECO:0007669"/>
    <property type="project" value="UniProtKB-UniRule"/>
</dbReference>
<dbReference type="CDD" id="cd00515">
    <property type="entry name" value="HAM1"/>
    <property type="match status" value="1"/>
</dbReference>
<dbReference type="FunFam" id="3.90.950.10:FF:000001">
    <property type="entry name" value="dITP/XTP pyrophosphatase"/>
    <property type="match status" value="1"/>
</dbReference>
<dbReference type="Gene3D" id="3.90.950.10">
    <property type="match status" value="1"/>
</dbReference>
<dbReference type="HAMAP" id="MF_01405">
    <property type="entry name" value="Non_canon_purine_NTPase"/>
    <property type="match status" value="1"/>
</dbReference>
<dbReference type="InterPro" id="IPR020922">
    <property type="entry name" value="dITP/XTP_pyrophosphatase"/>
</dbReference>
<dbReference type="InterPro" id="IPR029001">
    <property type="entry name" value="ITPase-like_fam"/>
</dbReference>
<dbReference type="InterPro" id="IPR002637">
    <property type="entry name" value="RdgB/HAM1"/>
</dbReference>
<dbReference type="NCBIfam" id="TIGR00042">
    <property type="entry name" value="RdgB/HAM1 family non-canonical purine NTP pyrophosphatase"/>
    <property type="match status" value="1"/>
</dbReference>
<dbReference type="PANTHER" id="PTHR11067:SF9">
    <property type="entry name" value="INOSINE TRIPHOSPHATE PYROPHOSPHATASE"/>
    <property type="match status" value="1"/>
</dbReference>
<dbReference type="PANTHER" id="PTHR11067">
    <property type="entry name" value="INOSINE TRIPHOSPHATE PYROPHOSPHATASE/HAM1 PROTEIN"/>
    <property type="match status" value="1"/>
</dbReference>
<dbReference type="Pfam" id="PF01725">
    <property type="entry name" value="Ham1p_like"/>
    <property type="match status" value="1"/>
</dbReference>
<dbReference type="SUPFAM" id="SSF52972">
    <property type="entry name" value="ITPase-like"/>
    <property type="match status" value="1"/>
</dbReference>
<feature type="chain" id="PRO_0000178204" description="dITP/XTP pyrophosphatase">
    <location>
        <begin position="1"/>
        <end position="199"/>
    </location>
</feature>
<feature type="active site" description="Proton acceptor" evidence="1">
    <location>
        <position position="70"/>
    </location>
</feature>
<feature type="binding site" evidence="1">
    <location>
        <begin position="7"/>
        <end position="12"/>
    </location>
    <ligand>
        <name>substrate</name>
    </ligand>
</feature>
<feature type="binding site" evidence="1">
    <location>
        <position position="41"/>
    </location>
    <ligand>
        <name>Mg(2+)</name>
        <dbReference type="ChEBI" id="CHEBI:18420"/>
    </ligand>
</feature>
<feature type="binding site" evidence="1">
    <location>
        <position position="70"/>
    </location>
    <ligand>
        <name>Mg(2+)</name>
        <dbReference type="ChEBI" id="CHEBI:18420"/>
    </ligand>
</feature>
<feature type="binding site" evidence="1">
    <location>
        <position position="71"/>
    </location>
    <ligand>
        <name>substrate</name>
    </ligand>
</feature>
<feature type="binding site" evidence="1">
    <location>
        <begin position="154"/>
        <end position="157"/>
    </location>
    <ligand>
        <name>substrate</name>
    </ligand>
</feature>
<feature type="binding site" evidence="1">
    <location>
        <position position="177"/>
    </location>
    <ligand>
        <name>substrate</name>
    </ligand>
</feature>
<feature type="binding site" evidence="1">
    <location>
        <begin position="182"/>
        <end position="183"/>
    </location>
    <ligand>
        <name>substrate</name>
    </ligand>
</feature>